<gene>
    <name type="primary">myf6</name>
    <name type="synonym">mrf4</name>
</gene>
<evidence type="ECO:0000250" key="1"/>
<evidence type="ECO:0000255" key="2">
    <source>
        <dbReference type="PROSITE-ProRule" id="PRU00981"/>
    </source>
</evidence>
<evidence type="ECO:0000256" key="3">
    <source>
        <dbReference type="SAM" id="MobiDB-lite"/>
    </source>
</evidence>
<evidence type="ECO:0000305" key="4"/>
<keyword id="KW-0217">Developmental protein</keyword>
<keyword id="KW-0221">Differentiation</keyword>
<keyword id="KW-0238">DNA-binding</keyword>
<keyword id="KW-0517">Myogenesis</keyword>
<keyword id="KW-0539">Nucleus</keyword>
<keyword id="KW-1185">Reference proteome</keyword>
<accession>Q6SYV5</accession>
<accession>Q90ZL0</accession>
<protein>
    <recommendedName>
        <fullName>Myogenic factor 6</fullName>
        <shortName>Myf-6</shortName>
    </recommendedName>
    <alternativeName>
        <fullName>Muscle-specific regulatory factor 4</fullName>
    </alternativeName>
</protein>
<comment type="function">
    <text evidence="1">Involved in muscle differentiation (myogenic factor). Induces fibroblasts to differentiate into myoblasts. Probable sequence specific DNA-binding protein (By similarity).</text>
</comment>
<comment type="subunit">
    <text evidence="1">Efficient DNA binding requires dimerization with another bHLH protein.</text>
</comment>
<comment type="subcellular location">
    <subcellularLocation>
        <location evidence="2">Nucleus</location>
    </subcellularLocation>
</comment>
<sequence>MMDLFETNTYLFNDLRYLEEGDHGPLQHLDMSGVSPLYNGNDSPLSPGQDNVPSETGGESSGDEHVLAPPGLRSHCEGQCLMWACKICKRKSAPTDRRKAATLRERRRLKKINEAFDALKRKTVANPNQRLPKVEILRSAISYIERLQDLLQTLDEQERSQSGASDTRNDKEQNRPSGGDYRWKKASNTWPTSADHSAIINQRDGNCESSATSSLLCLSSIVSSISDDKTNLRQGVQED</sequence>
<proteinExistence type="evidence at transcript level"/>
<feature type="chain" id="PRO_0000127357" description="Myogenic factor 6">
    <location>
        <begin position="1"/>
        <end position="239"/>
    </location>
</feature>
<feature type="domain" description="bHLH" evidence="2">
    <location>
        <begin position="96"/>
        <end position="147"/>
    </location>
</feature>
<feature type="region of interest" description="Disordered" evidence="3">
    <location>
        <begin position="28"/>
        <end position="64"/>
    </location>
</feature>
<feature type="region of interest" description="Disordered" evidence="3">
    <location>
        <begin position="155"/>
        <end position="189"/>
    </location>
</feature>
<feature type="compositionally biased region" description="Polar residues" evidence="3">
    <location>
        <begin position="38"/>
        <end position="58"/>
    </location>
</feature>
<feature type="sequence conflict" description="In Ref. 2; CAC39207." evidence="4" ref="2">
    <original>R</original>
    <variation>G</variation>
    <location>
        <position position="16"/>
    </location>
</feature>
<feature type="sequence conflict" description="In Ref. 2; CAC39207." evidence="4" ref="2">
    <original>S</original>
    <variation>R</variation>
    <location>
        <position position="43"/>
    </location>
</feature>
<feature type="sequence conflict" description="In Ref. 2; CAC39207." evidence="4" ref="2">
    <original>G</original>
    <variation>V</variation>
    <location>
        <position position="179"/>
    </location>
</feature>
<feature type="sequence conflict" description="In Ref. 2; CAC39207." evidence="4" ref="2">
    <original>D</original>
    <variation>N</variation>
    <location>
        <position position="239"/>
    </location>
</feature>
<organism>
    <name type="scientific">Takifugu rubripes</name>
    <name type="common">Japanese pufferfish</name>
    <name type="synonym">Fugu rubripes</name>
    <dbReference type="NCBI Taxonomy" id="31033"/>
    <lineage>
        <taxon>Eukaryota</taxon>
        <taxon>Metazoa</taxon>
        <taxon>Chordata</taxon>
        <taxon>Craniata</taxon>
        <taxon>Vertebrata</taxon>
        <taxon>Euteleostomi</taxon>
        <taxon>Actinopterygii</taxon>
        <taxon>Neopterygii</taxon>
        <taxon>Teleostei</taxon>
        <taxon>Neoteleostei</taxon>
        <taxon>Acanthomorphata</taxon>
        <taxon>Eupercaria</taxon>
        <taxon>Tetraodontiformes</taxon>
        <taxon>Tetradontoidea</taxon>
        <taxon>Tetraodontidae</taxon>
        <taxon>Takifugu</taxon>
    </lineage>
</organism>
<dbReference type="EMBL" id="AY445320">
    <property type="protein sequence ID" value="AAR20812.1"/>
    <property type="molecule type" value="mRNA"/>
</dbReference>
<dbReference type="EMBL" id="AJ308546">
    <property type="protein sequence ID" value="CAC39207.1"/>
    <property type="molecule type" value="Genomic_DNA"/>
</dbReference>
<dbReference type="RefSeq" id="NP_001027943.1">
    <property type="nucleotide sequence ID" value="NM_001032771.1"/>
</dbReference>
<dbReference type="SMR" id="Q6SYV5"/>
<dbReference type="FunCoup" id="Q6SYV5">
    <property type="interactions" value="238"/>
</dbReference>
<dbReference type="STRING" id="31033.ENSTRUP00000027394"/>
<dbReference type="GeneID" id="446039"/>
<dbReference type="KEGG" id="tru:446039"/>
<dbReference type="CTD" id="4618"/>
<dbReference type="eggNOG" id="KOG3960">
    <property type="taxonomic scope" value="Eukaryota"/>
</dbReference>
<dbReference type="InParanoid" id="Q6SYV5"/>
<dbReference type="OrthoDB" id="10049614at2759"/>
<dbReference type="Proteomes" id="UP000005226">
    <property type="component" value="Unplaced"/>
</dbReference>
<dbReference type="GO" id="GO:0005634">
    <property type="term" value="C:nucleus"/>
    <property type="evidence" value="ECO:0007669"/>
    <property type="project" value="UniProtKB-SubCell"/>
</dbReference>
<dbReference type="GO" id="GO:0000981">
    <property type="term" value="F:DNA-binding transcription factor activity, RNA polymerase II-specific"/>
    <property type="evidence" value="ECO:0007669"/>
    <property type="project" value="TreeGrafter"/>
</dbReference>
<dbReference type="GO" id="GO:0046983">
    <property type="term" value="F:protein dimerization activity"/>
    <property type="evidence" value="ECO:0007669"/>
    <property type="project" value="InterPro"/>
</dbReference>
<dbReference type="GO" id="GO:0000978">
    <property type="term" value="F:RNA polymerase II cis-regulatory region sequence-specific DNA binding"/>
    <property type="evidence" value="ECO:0007669"/>
    <property type="project" value="TreeGrafter"/>
</dbReference>
<dbReference type="GO" id="GO:0045663">
    <property type="term" value="P:positive regulation of myoblast differentiation"/>
    <property type="evidence" value="ECO:0007669"/>
    <property type="project" value="TreeGrafter"/>
</dbReference>
<dbReference type="GO" id="GO:0048743">
    <property type="term" value="P:positive regulation of skeletal muscle fiber development"/>
    <property type="evidence" value="ECO:0007669"/>
    <property type="project" value="TreeGrafter"/>
</dbReference>
<dbReference type="GO" id="GO:0035914">
    <property type="term" value="P:skeletal muscle cell differentiation"/>
    <property type="evidence" value="ECO:0007669"/>
    <property type="project" value="TreeGrafter"/>
</dbReference>
<dbReference type="FunFam" id="4.10.280.10:FF:000005">
    <property type="entry name" value="Myogenic factor"/>
    <property type="match status" value="1"/>
</dbReference>
<dbReference type="Gene3D" id="4.10.280.10">
    <property type="entry name" value="Helix-loop-helix DNA-binding domain"/>
    <property type="match status" value="1"/>
</dbReference>
<dbReference type="InterPro" id="IPR011598">
    <property type="entry name" value="bHLH_dom"/>
</dbReference>
<dbReference type="InterPro" id="IPR036638">
    <property type="entry name" value="HLH_DNA-bd_sf"/>
</dbReference>
<dbReference type="InterPro" id="IPR002546">
    <property type="entry name" value="MyoD_N"/>
</dbReference>
<dbReference type="InterPro" id="IPR039704">
    <property type="entry name" value="Myogenic_factor"/>
</dbReference>
<dbReference type="PANTHER" id="PTHR11534">
    <property type="entry name" value="MYOGENIC FACTOR"/>
    <property type="match status" value="1"/>
</dbReference>
<dbReference type="PANTHER" id="PTHR11534:SF4">
    <property type="entry name" value="MYOGENIC FACTOR 6"/>
    <property type="match status" value="1"/>
</dbReference>
<dbReference type="Pfam" id="PF01586">
    <property type="entry name" value="Basic"/>
    <property type="match status" value="1"/>
</dbReference>
<dbReference type="Pfam" id="PF00010">
    <property type="entry name" value="HLH"/>
    <property type="match status" value="1"/>
</dbReference>
<dbReference type="SMART" id="SM00520">
    <property type="entry name" value="BASIC"/>
    <property type="match status" value="1"/>
</dbReference>
<dbReference type="SMART" id="SM00353">
    <property type="entry name" value="HLH"/>
    <property type="match status" value="1"/>
</dbReference>
<dbReference type="SUPFAM" id="SSF47459">
    <property type="entry name" value="HLH, helix-loop-helix DNA-binding domain"/>
    <property type="match status" value="1"/>
</dbReference>
<dbReference type="PROSITE" id="PS50888">
    <property type="entry name" value="BHLH"/>
    <property type="match status" value="1"/>
</dbReference>
<reference key="1">
    <citation type="submission" date="2003-10" db="EMBL/GenBank/DDBJ databases">
        <title>Myf6 cDNA from Fugu rubripes.</title>
        <authorList>
            <person name="Fernandes J.M."/>
            <person name="Mackenzie M.G."/>
            <person name="Kinghorn J.R."/>
            <person name="Johnston I.A."/>
        </authorList>
    </citation>
    <scope>NUCLEOTIDE SEQUENCE [MRNA]</scope>
</reference>
<reference key="2">
    <citation type="submission" date="2001-02" db="EMBL/GenBank/DDBJ databases">
        <title>Cross species transgenics show different interpretation of transcription factor signals in mouse and Fugu myf5.</title>
        <authorList>
            <person name="Coutelle O."/>
            <person name="Summerbell D."/>
            <person name="Halai C."/>
            <person name="Sydney B."/>
            <person name="Rigby P.W."/>
        </authorList>
    </citation>
    <scope>NUCLEOTIDE SEQUENCE [GENOMIC DNA]</scope>
</reference>
<name>MYF6_TAKRU</name>